<sequence>MARLTVITTGGTISTTAGPDGVLRPTHCGATLIAGLDMDSDIEVVDLMALDSSKLTPADWDRIGAAVQEAFRGGADGVVITHGTDTLEETALWLDLTYAGSRPVVLTGAMLSADAPGADGPANLRDALAVAADPAARDLGVLVSFGGRVLQPLGLHKVANPDLCGFAGESLGFTSGGVRLTRTKTRPYLGDLGAAVAPRVDIVAVYPGSDAVAMDACVAAGARAVVLEALGSGNAGAAVIEGVRRHCRDGSDPVVIAVSTRVAGARVGAGYGPGHDLVEAGAVMVPRLPPSQARVLLMAALAANSPVADVIDRWG</sequence>
<organism>
    <name type="scientific">Mycobacterium bovis (strain ATCC BAA-935 / AF2122/97)</name>
    <dbReference type="NCBI Taxonomy" id="233413"/>
    <lineage>
        <taxon>Bacteria</taxon>
        <taxon>Bacillati</taxon>
        <taxon>Actinomycetota</taxon>
        <taxon>Actinomycetes</taxon>
        <taxon>Mycobacteriales</taxon>
        <taxon>Mycobacteriaceae</taxon>
        <taxon>Mycobacterium</taxon>
        <taxon>Mycobacterium tuberculosis complex</taxon>
    </lineage>
</organism>
<dbReference type="EC" id="3.5.1.1" evidence="2"/>
<dbReference type="EMBL" id="LT708304">
    <property type="protein sequence ID" value="SIU00168.1"/>
    <property type="status" value="ALT_INIT"/>
    <property type="molecule type" value="Genomic_DNA"/>
</dbReference>
<dbReference type="RefSeq" id="NP_855217.1">
    <property type="nucleotide sequence ID" value="NC_002945.3"/>
</dbReference>
<dbReference type="SMR" id="P63628"/>
<dbReference type="KEGG" id="mbo:BQ2027_MB1565C"/>
<dbReference type="PATRIC" id="fig|233413.5.peg.1711"/>
<dbReference type="Proteomes" id="UP000001419">
    <property type="component" value="Chromosome"/>
</dbReference>
<dbReference type="GO" id="GO:0005576">
    <property type="term" value="C:extracellular region"/>
    <property type="evidence" value="ECO:0007669"/>
    <property type="project" value="UniProtKB-SubCell"/>
</dbReference>
<dbReference type="GO" id="GO:0004067">
    <property type="term" value="F:asparaginase activity"/>
    <property type="evidence" value="ECO:0007669"/>
    <property type="project" value="UniProtKB-EC"/>
</dbReference>
<dbReference type="GO" id="GO:0006528">
    <property type="term" value="P:asparagine metabolic process"/>
    <property type="evidence" value="ECO:0007669"/>
    <property type="project" value="InterPro"/>
</dbReference>
<dbReference type="CDD" id="cd08964">
    <property type="entry name" value="L-asparaginase_II"/>
    <property type="match status" value="1"/>
</dbReference>
<dbReference type="FunFam" id="3.40.50.40:FF:000008">
    <property type="entry name" value="Probable L-asparaginase"/>
    <property type="match status" value="1"/>
</dbReference>
<dbReference type="Gene3D" id="3.40.50.40">
    <property type="match status" value="1"/>
</dbReference>
<dbReference type="Gene3D" id="3.40.50.1170">
    <property type="entry name" value="L-asparaginase, N-terminal domain"/>
    <property type="match status" value="1"/>
</dbReference>
<dbReference type="InterPro" id="IPR004550">
    <property type="entry name" value="AsnASE_II"/>
</dbReference>
<dbReference type="InterPro" id="IPR036152">
    <property type="entry name" value="Asp/glu_Ase-like_sf"/>
</dbReference>
<dbReference type="InterPro" id="IPR006034">
    <property type="entry name" value="Asparaginase/glutaminase-like"/>
</dbReference>
<dbReference type="InterPro" id="IPR020827">
    <property type="entry name" value="Asparaginase/glutaminase_AS1"/>
</dbReference>
<dbReference type="InterPro" id="IPR027475">
    <property type="entry name" value="Asparaginase/glutaminase_AS2"/>
</dbReference>
<dbReference type="InterPro" id="IPR040919">
    <property type="entry name" value="Asparaginase_C"/>
</dbReference>
<dbReference type="InterPro" id="IPR027473">
    <property type="entry name" value="L-asparaginase_C"/>
</dbReference>
<dbReference type="InterPro" id="IPR027474">
    <property type="entry name" value="L-asparaginase_N"/>
</dbReference>
<dbReference type="InterPro" id="IPR037152">
    <property type="entry name" value="L-asparaginase_N_sf"/>
</dbReference>
<dbReference type="PANTHER" id="PTHR11707:SF28">
    <property type="entry name" value="60 KDA LYSOPHOSPHOLIPASE"/>
    <property type="match status" value="1"/>
</dbReference>
<dbReference type="PANTHER" id="PTHR11707">
    <property type="entry name" value="L-ASPARAGINASE"/>
    <property type="match status" value="1"/>
</dbReference>
<dbReference type="Pfam" id="PF00710">
    <property type="entry name" value="Asparaginase"/>
    <property type="match status" value="1"/>
</dbReference>
<dbReference type="Pfam" id="PF17763">
    <property type="entry name" value="Asparaginase_C"/>
    <property type="match status" value="1"/>
</dbReference>
<dbReference type="PIRSF" id="PIRSF001220">
    <property type="entry name" value="L-ASNase_gatD"/>
    <property type="match status" value="1"/>
</dbReference>
<dbReference type="PIRSF" id="PIRSF500176">
    <property type="entry name" value="L_ASNase"/>
    <property type="match status" value="1"/>
</dbReference>
<dbReference type="PRINTS" id="PR00139">
    <property type="entry name" value="ASNGLNASE"/>
</dbReference>
<dbReference type="SFLD" id="SFLDS00057">
    <property type="entry name" value="Glutaminase/Asparaginase"/>
    <property type="match status" value="1"/>
</dbReference>
<dbReference type="SMART" id="SM00870">
    <property type="entry name" value="Asparaginase"/>
    <property type="match status" value="1"/>
</dbReference>
<dbReference type="SUPFAM" id="SSF53774">
    <property type="entry name" value="Glutaminase/Asparaginase"/>
    <property type="match status" value="1"/>
</dbReference>
<dbReference type="PROSITE" id="PS00144">
    <property type="entry name" value="ASN_GLN_ASE_1"/>
    <property type="match status" value="1"/>
</dbReference>
<dbReference type="PROSITE" id="PS00917">
    <property type="entry name" value="ASN_GLN_ASE_2"/>
    <property type="match status" value="1"/>
</dbReference>
<dbReference type="PROSITE" id="PS51732">
    <property type="entry name" value="ASN_GLN_ASE_3"/>
    <property type="match status" value="1"/>
</dbReference>
<comment type="function">
    <text evidence="2">Has a dual function in both nitrogen assimilation and in protection against acid stress during infection through asparagine hydrolysis and NH4(+) release. Catalyzes asparagine hydrolysis.</text>
</comment>
<comment type="catalytic activity">
    <reaction evidence="2">
        <text>L-asparagine + H2O = L-aspartate + NH4(+)</text>
        <dbReference type="Rhea" id="RHEA:21016"/>
        <dbReference type="ChEBI" id="CHEBI:15377"/>
        <dbReference type="ChEBI" id="CHEBI:28938"/>
        <dbReference type="ChEBI" id="CHEBI:29991"/>
        <dbReference type="ChEBI" id="CHEBI:58048"/>
        <dbReference type="EC" id="3.5.1.1"/>
    </reaction>
</comment>
<comment type="subcellular location">
    <subcellularLocation>
        <location evidence="2">Secreted</location>
    </subcellularLocation>
    <text evidence="2">Probably secreted via the ESX-5 / type VII secretion system (T7SS).</text>
</comment>
<comment type="similarity">
    <text evidence="4">Belongs to the asparaginase 1 family.</text>
</comment>
<comment type="sequence caution" evidence="4">
    <conflict type="erroneous initiation">
        <sequence resource="EMBL-CDS" id="SIU00168"/>
    </conflict>
    <text>Extended N-terminus.</text>
</comment>
<evidence type="ECO:0000250" key="1">
    <source>
        <dbReference type="UniProtKB" id="P00805"/>
    </source>
</evidence>
<evidence type="ECO:0000250" key="2">
    <source>
        <dbReference type="UniProtKB" id="P9WPX5"/>
    </source>
</evidence>
<evidence type="ECO:0000255" key="3">
    <source>
        <dbReference type="PROSITE-ProRule" id="PRU01068"/>
    </source>
</evidence>
<evidence type="ECO:0000305" key="4"/>
<gene>
    <name type="primary">ansA</name>
    <name type="ordered locus">BQ2027_MB1565C</name>
</gene>
<accession>P63628</accession>
<accession>A0A1R3XYM6</accession>
<accession>Q10759</accession>
<accession>X2BIG6</accession>
<keyword id="KW-0378">Hydrolase</keyword>
<keyword id="KW-1185">Reference proteome</keyword>
<keyword id="KW-0964">Secreted</keyword>
<name>ASPG_MYCBO</name>
<protein>
    <recommendedName>
        <fullName evidence="2">L-asparaginase</fullName>
        <shortName evidence="2">L-ASNase</shortName>
        <ecNumber evidence="2">3.5.1.1</ecNumber>
    </recommendedName>
    <alternativeName>
        <fullName evidence="2">L-asparagine amidohydrolase</fullName>
    </alternativeName>
</protein>
<feature type="chain" id="PRO_0000171085" description="L-asparaginase">
    <location>
        <begin position="1"/>
        <end position="315"/>
    </location>
</feature>
<feature type="domain" description="Asparaginase/glutaminase" evidence="3">
    <location>
        <begin position="2"/>
        <end position="315"/>
    </location>
</feature>
<feature type="active site" description="O-isoaspartyl threonine intermediate" evidence="1">
    <location>
        <position position="12"/>
    </location>
</feature>
<feature type="binding site" evidence="1">
    <location>
        <begin position="52"/>
        <end position="53"/>
    </location>
    <ligand>
        <name>substrate</name>
    </ligand>
</feature>
<feature type="binding site" evidence="1">
    <location>
        <begin position="84"/>
        <end position="85"/>
    </location>
    <ligand>
        <name>substrate</name>
    </ligand>
</feature>
<proteinExistence type="inferred from homology"/>
<reference key="1">
    <citation type="journal article" date="2003" name="Proc. Natl. Acad. Sci. U.S.A.">
        <title>The complete genome sequence of Mycobacterium bovis.</title>
        <authorList>
            <person name="Garnier T."/>
            <person name="Eiglmeier K."/>
            <person name="Camus J.-C."/>
            <person name="Medina N."/>
            <person name="Mansoor H."/>
            <person name="Pryor M."/>
            <person name="Duthoy S."/>
            <person name="Grondin S."/>
            <person name="Lacroix C."/>
            <person name="Monsempe C."/>
            <person name="Simon S."/>
            <person name="Harris B."/>
            <person name="Atkin R."/>
            <person name="Doggett J."/>
            <person name="Mayes R."/>
            <person name="Keating L."/>
            <person name="Wheeler P.R."/>
            <person name="Parkhill J."/>
            <person name="Barrell B.G."/>
            <person name="Cole S.T."/>
            <person name="Gordon S.V."/>
            <person name="Hewinson R.G."/>
        </authorList>
    </citation>
    <scope>NUCLEOTIDE SEQUENCE [LARGE SCALE GENOMIC DNA]</scope>
    <source>
        <strain>ATCC BAA-935 / AF2122/97</strain>
    </source>
</reference>
<reference key="2">
    <citation type="journal article" date="2017" name="Genome Announc.">
        <title>Updated reference genome sequence and annotation of Mycobacterium bovis AF2122/97.</title>
        <authorList>
            <person name="Malone K.M."/>
            <person name="Farrell D."/>
            <person name="Stuber T.P."/>
            <person name="Schubert O.T."/>
            <person name="Aebersold R."/>
            <person name="Robbe-Austerman S."/>
            <person name="Gordon S.V."/>
        </authorList>
    </citation>
    <scope>NUCLEOTIDE SEQUENCE [LARGE SCALE GENOMIC DNA]</scope>
    <scope>GENOME REANNOTATION</scope>
    <source>
        <strain>ATCC BAA-935 / AF2122/97</strain>
    </source>
</reference>